<accession>Q9Y5E7</accession>
<accession>Q4KMU1</accession>
<sequence>MEAGEGKERVPKQRQVLIFFVLLGIAQASCQPRHYSVAEETESGSFVANLLKDLGLEIGELAVRGARVVSKGKKMHLQFDRQTGDLLLNEKLDREELCGPTEPCVLPFQVLLENPLQFFQAELRIRDVNDHSPVFLDKEILLKIPESITPGTTFLIERAQDLDVGTNSLQNYTISPNFHFHLNLQDSLDGIILPQLVLNRALDREEQPEIRLTLTALDGGSPPRSGTALVRIEVVDINDNVPEFAKLLYEVQIPEDSPVGSQVAIVSARDLDIGTNGEISYAFSQASEDIRKTFRLSAKSGELLLRQKLDFESIQTYTVNIQATDGGGLSGTCVVFVQVMDLNDNPPELTMSTLINQIPENLQDTLIAVFSVSDPDSGDNGRMVCSIQDDLPFFLKPSVENFYTLVISTALDRETRSEYNITITVTDFGTPRLKTEHNITVLVSDVNDNAPAFTQTSYTLFVRENNSPALHIGSVSATDRDSGTNAQVTYSLLPPQDPHLPLASLVSINADNGHLFALQSLDYEALQAFEFRVGAADRGSPALSSEALVRVLVLDANDNSPFVLYPLQNGSAPCTELVPRAAEPGYLVTKVVAVDGDSGQNAWLSYQLLKATEPGLFGVWAHNGEVRTARLLRERDAAKQRLVVLVKDNGEPPRSATATLHVLLVDGFSQPYLLLPEAAPAQAQADLLTVYLVVALASVSSLFLFSVLLFVAVRLCRRSRAASVGRCSVPEGPFPGQMVDVSGTGTLSQSYQYEVCLTGGSGTNEFKFLKPIIPNFVAQGAERVSEANPSFRKSFEFT</sequence>
<organism>
    <name type="scientific">Homo sapiens</name>
    <name type="common">Human</name>
    <dbReference type="NCBI Taxonomy" id="9606"/>
    <lineage>
        <taxon>Eukaryota</taxon>
        <taxon>Metazoa</taxon>
        <taxon>Chordata</taxon>
        <taxon>Craniata</taxon>
        <taxon>Vertebrata</taxon>
        <taxon>Euteleostomi</taxon>
        <taxon>Mammalia</taxon>
        <taxon>Eutheria</taxon>
        <taxon>Euarchontoglires</taxon>
        <taxon>Primates</taxon>
        <taxon>Haplorrhini</taxon>
        <taxon>Catarrhini</taxon>
        <taxon>Hominidae</taxon>
        <taxon>Homo</taxon>
    </lineage>
</organism>
<evidence type="ECO:0000250" key="1"/>
<evidence type="ECO:0000255" key="2"/>
<evidence type="ECO:0000255" key="3">
    <source>
        <dbReference type="PROSITE-ProRule" id="PRU00043"/>
    </source>
</evidence>
<evidence type="ECO:0007744" key="4">
    <source>
    </source>
</evidence>
<proteinExistence type="evidence at protein level"/>
<name>PCDB2_HUMAN</name>
<comment type="function">
    <text>Potential calcium-dependent cell-adhesion protein. May be involved in the establishment and maintenance of specific neuronal connections in the brain.</text>
</comment>
<comment type="subcellular location">
    <subcellularLocation>
        <location evidence="1">Cell membrane</location>
        <topology evidence="1">Single-pass type I membrane protein</topology>
    </subcellularLocation>
</comment>
<reference key="1">
    <citation type="journal article" date="1999" name="Cell">
        <title>A striking organization of a large family of human neural cadherin-like cell adhesion genes.</title>
        <authorList>
            <person name="Wu Q."/>
            <person name="Maniatis T."/>
        </authorList>
    </citation>
    <scope>NUCLEOTIDE SEQUENCE [MRNA]</scope>
</reference>
<reference key="2">
    <citation type="journal article" date="2001" name="FEBS Lett.">
        <title>The human and murine protocadherin-beta one-exon gene families show high evolutionary conservation, despite the difference in gene number.</title>
        <authorList>
            <person name="Vanhalst K."/>
            <person name="Kools P."/>
            <person name="Vanden Eynde E."/>
            <person name="van Roy F."/>
        </authorList>
    </citation>
    <scope>NUCLEOTIDE SEQUENCE [MRNA]</scope>
</reference>
<reference key="3">
    <citation type="journal article" date="2004" name="Genome Res.">
        <title>The status, quality, and expansion of the NIH full-length cDNA project: the Mammalian Gene Collection (MGC).</title>
        <authorList>
            <consortium name="The MGC Project Team"/>
        </authorList>
    </citation>
    <scope>NUCLEOTIDE SEQUENCE [LARGE SCALE MRNA]</scope>
</reference>
<reference key="4">
    <citation type="journal article" date="2009" name="Science">
        <title>Lysine acetylation targets protein complexes and co-regulates major cellular functions.</title>
        <authorList>
            <person name="Choudhary C."/>
            <person name="Kumar C."/>
            <person name="Gnad F."/>
            <person name="Nielsen M.L."/>
            <person name="Rehman M."/>
            <person name="Walther T.C."/>
            <person name="Olsen J.V."/>
            <person name="Mann M."/>
        </authorList>
    </citation>
    <scope>ACETYLATION [LARGE SCALE ANALYSIS] AT LYS-299</scope>
    <scope>IDENTIFICATION BY MASS SPECTROMETRY [LARGE SCALE ANALYSIS]</scope>
</reference>
<dbReference type="EMBL" id="AF152495">
    <property type="protein sequence ID" value="AAD43756.1"/>
    <property type="molecule type" value="mRNA"/>
</dbReference>
<dbReference type="EMBL" id="AF217756">
    <property type="protein sequence ID" value="AAK51623.1"/>
    <property type="molecule type" value="mRNA"/>
</dbReference>
<dbReference type="EMBL" id="BC098347">
    <property type="protein sequence ID" value="AAH98347.1"/>
    <property type="molecule type" value="mRNA"/>
</dbReference>
<dbReference type="CCDS" id="CCDS4244.1"/>
<dbReference type="RefSeq" id="NP_061759.1">
    <property type="nucleotide sequence ID" value="NM_018936.4"/>
</dbReference>
<dbReference type="SMR" id="Q9Y5E7"/>
<dbReference type="BioGRID" id="121073">
    <property type="interactions" value="17"/>
</dbReference>
<dbReference type="FunCoup" id="Q9Y5E7">
    <property type="interactions" value="128"/>
</dbReference>
<dbReference type="IntAct" id="Q9Y5E7">
    <property type="interactions" value="8"/>
</dbReference>
<dbReference type="STRING" id="9606.ENSP00000194155"/>
<dbReference type="GlyConnect" id="1681">
    <property type="glycosylation" value="1 N-Linked glycan (1 site)"/>
</dbReference>
<dbReference type="GlyCosmos" id="Q9Y5E7">
    <property type="glycosylation" value="4 sites, 1 glycan"/>
</dbReference>
<dbReference type="GlyGen" id="Q9Y5E7">
    <property type="glycosylation" value="5 sites, 1 N-linked glycan (1 site)"/>
</dbReference>
<dbReference type="iPTMnet" id="Q9Y5E7"/>
<dbReference type="PhosphoSitePlus" id="Q9Y5E7"/>
<dbReference type="SwissPalm" id="Q9Y5E7"/>
<dbReference type="BioMuta" id="PCDHB2"/>
<dbReference type="DMDM" id="13431378"/>
<dbReference type="jPOST" id="Q9Y5E7"/>
<dbReference type="MassIVE" id="Q9Y5E7"/>
<dbReference type="PaxDb" id="9606-ENSP00000194155"/>
<dbReference type="PeptideAtlas" id="Q9Y5E7"/>
<dbReference type="ProteomicsDB" id="86346"/>
<dbReference type="Antibodypedia" id="27181">
    <property type="antibodies" value="53 antibodies from 9 providers"/>
</dbReference>
<dbReference type="DNASU" id="56133"/>
<dbReference type="Ensembl" id="ENST00000194155.7">
    <property type="protein sequence ID" value="ENSP00000194155.4"/>
    <property type="gene ID" value="ENSG00000112852.7"/>
</dbReference>
<dbReference type="Ensembl" id="ENST00000708339.1">
    <property type="protein sequence ID" value="ENSP00000517180.1"/>
    <property type="gene ID" value="ENSG00000291672.1"/>
</dbReference>
<dbReference type="GeneID" id="56133"/>
<dbReference type="KEGG" id="hsa:56133"/>
<dbReference type="MANE-Select" id="ENST00000194155.7">
    <property type="protein sequence ID" value="ENSP00000194155.4"/>
    <property type="RefSeq nucleotide sequence ID" value="NM_018936.4"/>
    <property type="RefSeq protein sequence ID" value="NP_061759.1"/>
</dbReference>
<dbReference type="UCSC" id="uc003lil.5">
    <property type="organism name" value="human"/>
</dbReference>
<dbReference type="AGR" id="HGNC:8687"/>
<dbReference type="CTD" id="56133"/>
<dbReference type="DisGeNET" id="56133"/>
<dbReference type="GeneCards" id="PCDHB2"/>
<dbReference type="HGNC" id="HGNC:8687">
    <property type="gene designation" value="PCDHB2"/>
</dbReference>
<dbReference type="HPA" id="ENSG00000112852">
    <property type="expression patterns" value="Low tissue specificity"/>
</dbReference>
<dbReference type="MIM" id="604967">
    <property type="type" value="gene"/>
</dbReference>
<dbReference type="MIM" id="606328">
    <property type="type" value="gene"/>
</dbReference>
<dbReference type="neXtProt" id="NX_Q9Y5E7"/>
<dbReference type="OpenTargets" id="ENSG00000112852"/>
<dbReference type="PharmGKB" id="PA33036"/>
<dbReference type="VEuPathDB" id="HostDB:ENSG00000112852"/>
<dbReference type="eggNOG" id="KOG3594">
    <property type="taxonomic scope" value="Eukaryota"/>
</dbReference>
<dbReference type="GeneTree" id="ENSGT00940000163333"/>
<dbReference type="HOGENOM" id="CLU_006480_3_0_1"/>
<dbReference type="InParanoid" id="Q9Y5E7"/>
<dbReference type="OMA" id="SPNFYFH"/>
<dbReference type="OrthoDB" id="6252479at2759"/>
<dbReference type="PAN-GO" id="Q9Y5E7">
    <property type="GO annotations" value="2 GO annotations based on evolutionary models"/>
</dbReference>
<dbReference type="PhylomeDB" id="Q9Y5E7"/>
<dbReference type="TreeFam" id="TF332299"/>
<dbReference type="PathwayCommons" id="Q9Y5E7"/>
<dbReference type="SignaLink" id="Q9Y5E7"/>
<dbReference type="BioGRID-ORCS" id="56133">
    <property type="hits" value="13 hits in 1108 CRISPR screens"/>
</dbReference>
<dbReference type="GeneWiki" id="PCDHB2"/>
<dbReference type="GenomeRNAi" id="56133"/>
<dbReference type="Pharos" id="Q9Y5E7">
    <property type="development level" value="Tdark"/>
</dbReference>
<dbReference type="PRO" id="PR:Q9Y5E7"/>
<dbReference type="Proteomes" id="UP000005640">
    <property type="component" value="Chromosome 5"/>
</dbReference>
<dbReference type="RNAct" id="Q9Y5E7">
    <property type="molecule type" value="protein"/>
</dbReference>
<dbReference type="Bgee" id="ENSG00000112852">
    <property type="expression patterns" value="Expressed in primordial germ cell in gonad and 105 other cell types or tissues"/>
</dbReference>
<dbReference type="ExpressionAtlas" id="Q9Y5E7">
    <property type="expression patterns" value="baseline and differential"/>
</dbReference>
<dbReference type="GO" id="GO:0016020">
    <property type="term" value="C:membrane"/>
    <property type="evidence" value="ECO:0000303"/>
    <property type="project" value="UniProtKB"/>
</dbReference>
<dbReference type="GO" id="GO:0005886">
    <property type="term" value="C:plasma membrane"/>
    <property type="evidence" value="ECO:0000318"/>
    <property type="project" value="GO_Central"/>
</dbReference>
<dbReference type="GO" id="GO:0045202">
    <property type="term" value="C:synapse"/>
    <property type="evidence" value="ECO:0007669"/>
    <property type="project" value="GOC"/>
</dbReference>
<dbReference type="GO" id="GO:0005509">
    <property type="term" value="F:calcium ion binding"/>
    <property type="evidence" value="ECO:0007669"/>
    <property type="project" value="InterPro"/>
</dbReference>
<dbReference type="GO" id="GO:0016339">
    <property type="term" value="P:calcium-dependent cell-cell adhesion via plasma membrane cell adhesion molecules"/>
    <property type="evidence" value="ECO:0000303"/>
    <property type="project" value="UniProtKB"/>
</dbReference>
<dbReference type="GO" id="GO:0007155">
    <property type="term" value="P:cell adhesion"/>
    <property type="evidence" value="ECO:0000318"/>
    <property type="project" value="GO_Central"/>
</dbReference>
<dbReference type="GO" id="GO:0007268">
    <property type="term" value="P:chemical synaptic transmission"/>
    <property type="evidence" value="ECO:0000304"/>
    <property type="project" value="UniProtKB"/>
</dbReference>
<dbReference type="GO" id="GO:0007156">
    <property type="term" value="P:homophilic cell adhesion via plasma membrane adhesion molecules"/>
    <property type="evidence" value="ECO:0007669"/>
    <property type="project" value="InterPro"/>
</dbReference>
<dbReference type="GO" id="GO:0007399">
    <property type="term" value="P:nervous system development"/>
    <property type="evidence" value="ECO:0000304"/>
    <property type="project" value="ProtInc"/>
</dbReference>
<dbReference type="GO" id="GO:0007416">
    <property type="term" value="P:synapse assembly"/>
    <property type="evidence" value="ECO:0000304"/>
    <property type="project" value="UniProtKB"/>
</dbReference>
<dbReference type="CDD" id="cd11304">
    <property type="entry name" value="Cadherin_repeat"/>
    <property type="match status" value="5"/>
</dbReference>
<dbReference type="FunFam" id="2.60.40.60:FF:000001">
    <property type="entry name" value="Protocadherin alpha 2"/>
    <property type="match status" value="1"/>
</dbReference>
<dbReference type="FunFam" id="2.60.40.60:FF:000002">
    <property type="entry name" value="Protocadherin alpha 2"/>
    <property type="match status" value="1"/>
</dbReference>
<dbReference type="FunFam" id="2.60.40.60:FF:000006">
    <property type="entry name" value="Protocadherin alpha 2"/>
    <property type="match status" value="1"/>
</dbReference>
<dbReference type="FunFam" id="2.60.40.60:FF:000046">
    <property type="entry name" value="Protocadherin beta 5"/>
    <property type="match status" value="1"/>
</dbReference>
<dbReference type="FunFam" id="2.60.40.60:FF:000309">
    <property type="entry name" value="Protocadherin beta-8"/>
    <property type="match status" value="1"/>
</dbReference>
<dbReference type="FunFam" id="2.60.40.60:FF:000018">
    <property type="entry name" value="Protocadherin gamma c3"/>
    <property type="match status" value="1"/>
</dbReference>
<dbReference type="Gene3D" id="2.60.40.60">
    <property type="entry name" value="Cadherins"/>
    <property type="match status" value="6"/>
</dbReference>
<dbReference type="InterPro" id="IPR002126">
    <property type="entry name" value="Cadherin-like_dom"/>
</dbReference>
<dbReference type="InterPro" id="IPR015919">
    <property type="entry name" value="Cadherin-like_sf"/>
</dbReference>
<dbReference type="InterPro" id="IPR032455">
    <property type="entry name" value="Cadherin_C"/>
</dbReference>
<dbReference type="InterPro" id="IPR020894">
    <property type="entry name" value="Cadherin_CS"/>
</dbReference>
<dbReference type="InterPro" id="IPR013164">
    <property type="entry name" value="Cadherin_N"/>
</dbReference>
<dbReference type="InterPro" id="IPR050174">
    <property type="entry name" value="Protocadherin/Cadherin-CA"/>
</dbReference>
<dbReference type="PANTHER" id="PTHR24028">
    <property type="entry name" value="CADHERIN-87A"/>
    <property type="match status" value="1"/>
</dbReference>
<dbReference type="PANTHER" id="PTHR24028:SF281">
    <property type="entry name" value="PROTOCADHERIN BETA-2"/>
    <property type="match status" value="1"/>
</dbReference>
<dbReference type="Pfam" id="PF00028">
    <property type="entry name" value="Cadherin"/>
    <property type="match status" value="5"/>
</dbReference>
<dbReference type="Pfam" id="PF08266">
    <property type="entry name" value="Cadherin_2"/>
    <property type="match status" value="1"/>
</dbReference>
<dbReference type="Pfam" id="PF16492">
    <property type="entry name" value="Cadherin_C_2"/>
    <property type="match status" value="1"/>
</dbReference>
<dbReference type="PRINTS" id="PR00205">
    <property type="entry name" value="CADHERIN"/>
</dbReference>
<dbReference type="SMART" id="SM00112">
    <property type="entry name" value="CA"/>
    <property type="match status" value="6"/>
</dbReference>
<dbReference type="SUPFAM" id="SSF49313">
    <property type="entry name" value="Cadherin-like"/>
    <property type="match status" value="5"/>
</dbReference>
<dbReference type="PROSITE" id="PS00232">
    <property type="entry name" value="CADHERIN_1"/>
    <property type="match status" value="5"/>
</dbReference>
<dbReference type="PROSITE" id="PS50268">
    <property type="entry name" value="CADHERIN_2"/>
    <property type="match status" value="6"/>
</dbReference>
<protein>
    <recommendedName>
        <fullName>Protocadherin beta-2</fullName>
        <shortName>PCDH-beta-2</shortName>
    </recommendedName>
</protein>
<keyword id="KW-0007">Acetylation</keyword>
<keyword id="KW-0106">Calcium</keyword>
<keyword id="KW-0130">Cell adhesion</keyword>
<keyword id="KW-1003">Cell membrane</keyword>
<keyword id="KW-0325">Glycoprotein</keyword>
<keyword id="KW-0472">Membrane</keyword>
<keyword id="KW-1267">Proteomics identification</keyword>
<keyword id="KW-1185">Reference proteome</keyword>
<keyword id="KW-0677">Repeat</keyword>
<keyword id="KW-0732">Signal</keyword>
<keyword id="KW-0812">Transmembrane</keyword>
<keyword id="KW-1133">Transmembrane helix</keyword>
<gene>
    <name type="primary">PCDHB2</name>
</gene>
<feature type="signal peptide" evidence="2">
    <location>
        <begin position="1"/>
        <end position="30"/>
    </location>
</feature>
<feature type="chain" id="PRO_0000003916" description="Protocadherin beta-2">
    <location>
        <begin position="31"/>
        <end position="798"/>
    </location>
</feature>
<feature type="topological domain" description="Extracellular" evidence="2">
    <location>
        <begin position="31"/>
        <end position="692"/>
    </location>
</feature>
<feature type="transmembrane region" description="Helical" evidence="2">
    <location>
        <begin position="693"/>
        <end position="713"/>
    </location>
</feature>
<feature type="topological domain" description="Cytoplasmic" evidence="2">
    <location>
        <begin position="714"/>
        <end position="798"/>
    </location>
</feature>
<feature type="domain" description="Cadherin 1" evidence="3">
    <location>
        <begin position="37"/>
        <end position="135"/>
    </location>
</feature>
<feature type="domain" description="Cadherin 2" evidence="3">
    <location>
        <begin position="136"/>
        <end position="244"/>
    </location>
</feature>
<feature type="domain" description="Cadherin 3" evidence="3">
    <location>
        <begin position="249"/>
        <end position="349"/>
    </location>
</feature>
<feature type="domain" description="Cadherin 4" evidence="3">
    <location>
        <begin position="354"/>
        <end position="453"/>
    </location>
</feature>
<feature type="domain" description="Cadherin 5" evidence="3">
    <location>
        <begin position="458"/>
        <end position="563"/>
    </location>
</feature>
<feature type="domain" description="Cadherin 6" evidence="3">
    <location>
        <begin position="570"/>
        <end position="673"/>
    </location>
</feature>
<feature type="modified residue" description="N6-acetyllysine" evidence="4">
    <location>
        <position position="299"/>
    </location>
</feature>
<feature type="glycosylation site" description="N-linked (GlcNAc...) asparagine" evidence="2">
    <location>
        <position position="171"/>
    </location>
</feature>
<feature type="glycosylation site" description="N-linked (GlcNAc...) asparagine" evidence="2">
    <location>
        <position position="420"/>
    </location>
</feature>
<feature type="glycosylation site" description="N-linked (GlcNAc...) asparagine" evidence="2">
    <location>
        <position position="438"/>
    </location>
</feature>
<feature type="glycosylation site" description="N-linked (GlcNAc...) asparagine" evidence="2">
    <location>
        <position position="569"/>
    </location>
</feature>
<feature type="sequence variant" id="VAR_020365" description="In dbSNP:rs31853.">
    <original>V</original>
    <variation>I</variation>
    <location>
        <position position="128"/>
    </location>
</feature>
<feature type="sequence variant" id="VAR_033701" description="In dbSNP:rs384081.">
    <original>L</original>
    <variation>P</variation>
    <location>
        <position position="674"/>
    </location>
</feature>
<feature type="sequence variant" id="VAR_033702" description="In dbSNP:rs1047372.">
    <original>G</original>
    <variation>D</variation>
    <location>
        <position position="760"/>
    </location>
</feature>